<accession>P80981</accession>
<proteinExistence type="evidence at protein level"/>
<feature type="chain" id="PRO_0000191308" description="Cytochrome c oxidase subunit 7B-liver, mitochondrial">
    <location>
        <begin position="1"/>
        <end position="20" status="greater than"/>
    </location>
</feature>
<feature type="non-terminal residue">
    <location>
        <position position="20"/>
    </location>
</feature>
<keyword id="KW-0903">Direct protein sequencing</keyword>
<keyword id="KW-0472">Membrane</keyword>
<keyword id="KW-0496">Mitochondrion</keyword>
<keyword id="KW-0999">Mitochondrion inner membrane</keyword>
<keyword id="KW-1278">Translocase</keyword>
<name>COXM_THUOB</name>
<dbReference type="EC" id="7.1.1.9"/>
<dbReference type="PIR" id="S77992">
    <property type="entry name" value="S77992"/>
</dbReference>
<dbReference type="UniPathway" id="UPA00705"/>
<dbReference type="GO" id="GO:0005743">
    <property type="term" value="C:mitochondrial inner membrane"/>
    <property type="evidence" value="ECO:0007669"/>
    <property type="project" value="UniProtKB-SubCell"/>
</dbReference>
<dbReference type="GO" id="GO:0004129">
    <property type="term" value="F:cytochrome-c oxidase activity"/>
    <property type="evidence" value="ECO:0007669"/>
    <property type="project" value="UniProtKB-EC"/>
</dbReference>
<dbReference type="GO" id="GO:0006119">
    <property type="term" value="P:oxidative phosphorylation"/>
    <property type="evidence" value="ECO:0007669"/>
    <property type="project" value="UniProtKB-UniPathway"/>
</dbReference>
<reference key="1">
    <citation type="journal article" date="1997" name="Eur. J. Biochem.">
        <title>The subunit structure of cytochrome-c oxidase from tuna heart and liver.</title>
        <authorList>
            <person name="Arnold S."/>
            <person name="Lee I."/>
            <person name="Kim M."/>
            <person name="Song E."/>
            <person name="Linder D."/>
            <person name="Lottspeich F."/>
            <person name="Kadenbach B."/>
        </authorList>
    </citation>
    <scope>PROTEIN SEQUENCE</scope>
    <source>
        <tissue>Liver</tissue>
    </source>
</reference>
<sequence>SNTSHQDFHSFYGTNLMIGG</sequence>
<evidence type="ECO:0000250" key="1">
    <source>
        <dbReference type="UniProtKB" id="P13183"/>
    </source>
</evidence>
<evidence type="ECO:0000305" key="2"/>
<protein>
    <recommendedName>
        <fullName>Cytochrome c oxidase subunit 7B-liver, mitochondrial</fullName>
        <ecNumber>7.1.1.9</ecNumber>
    </recommendedName>
    <alternativeName>
        <fullName>Cytochrome c oxidase polypeptide VIIb-liver</fullName>
    </alternativeName>
</protein>
<organism>
    <name type="scientific">Thunnus obesus</name>
    <name type="common">Bigeye tuna</name>
    <dbReference type="NCBI Taxonomy" id="8241"/>
    <lineage>
        <taxon>Eukaryota</taxon>
        <taxon>Metazoa</taxon>
        <taxon>Chordata</taxon>
        <taxon>Craniata</taxon>
        <taxon>Vertebrata</taxon>
        <taxon>Euteleostomi</taxon>
        <taxon>Actinopterygii</taxon>
        <taxon>Neopterygii</taxon>
        <taxon>Teleostei</taxon>
        <taxon>Neoteleostei</taxon>
        <taxon>Acanthomorphata</taxon>
        <taxon>Pelagiaria</taxon>
        <taxon>Scombriformes</taxon>
        <taxon>Scombridae</taxon>
        <taxon>Thunnus</taxon>
    </lineage>
</organism>
<comment type="function">
    <text evidence="1">Component of the cytochrome c oxidase, the last enzyme in the mitochondrial electron transport chain which drives oxidative phosphorylation. The respiratory chain contains 3 multisubunit complexes succinate dehydrogenase (complex II, CII), ubiquinol-cytochrome c oxidoreductase (cytochrome b-c1 complex, complex III, CIII) and cytochrome c oxidase (complex IV, CIV), that cooperate to transfer electrons derived from NADH and succinate to molecular oxygen, creating an electrochemical gradient over the inner membrane that drives transmembrane transport and the ATP synthase. Cytochrome c oxidase is the component of the respiratory chain that catalyzes the reduction of oxygen to water. Electrons originating from reduced cytochrome c in the intermembrane space (IMS) are transferred via the dinuclear copper A center (CU(A)) of subunit 2 and heme A of subunit 1 to the active site in subunit 1, a binuclear center (BNC) formed by heme A3 and copper B (CU(B)). The BNC reduces molecular oxygen to 2 water molecules using 4 electrons from cytochrome c in the IMS and 4 protons from the mitochondrial matrix.</text>
</comment>
<comment type="catalytic activity">
    <reaction>
        <text>4 Fe(II)-[cytochrome c] + O2 + 8 H(+)(in) = 4 Fe(III)-[cytochrome c] + 2 H2O + 4 H(+)(out)</text>
        <dbReference type="Rhea" id="RHEA:11436"/>
        <dbReference type="Rhea" id="RHEA-COMP:10350"/>
        <dbReference type="Rhea" id="RHEA-COMP:14399"/>
        <dbReference type="ChEBI" id="CHEBI:15377"/>
        <dbReference type="ChEBI" id="CHEBI:15378"/>
        <dbReference type="ChEBI" id="CHEBI:15379"/>
        <dbReference type="ChEBI" id="CHEBI:29033"/>
        <dbReference type="ChEBI" id="CHEBI:29034"/>
        <dbReference type="EC" id="7.1.1.9"/>
    </reaction>
</comment>
<comment type="pathway">
    <text evidence="1">Energy metabolism; oxidative phosphorylation.</text>
</comment>
<comment type="subunit">
    <text evidence="1">Component of the cytochrome c oxidase (complex IV, CIV), a multisubunit enzyme composed of 14 subunits. The complex is composed of a catalytic core of 3 subunits MT-CO1, MT-CO2 and MT-CO3, encoded in the mitochondrial DNA, and 11 supernumerary subunits COX4I, COX5A, COX5B, COX6A, COX6B, COX6C, COX7A, COX7B, COX7C, COX8 and NDUFA4, which are encoded in the nuclear genome. The complex exists as a monomer or a dimer and forms supercomplexes (SCs) in the inner mitochondrial membrane with NADH-ubiquinone oxidoreductase (complex I, CI) and ubiquinol-cytochrome c oxidoreductase (cytochrome b-c1 complex, complex III, CIII), resulting in different assemblies (supercomplex SCI(1)III(2)IV(1) and megacomplex MCI(2)III(2)IV(2)).</text>
</comment>
<comment type="subcellular location">
    <subcellularLocation>
        <location evidence="1">Mitochondrion inner membrane</location>
        <topology evidence="1">Single-pass membrane protein</topology>
    </subcellularLocation>
</comment>
<comment type="similarity">
    <text evidence="2">Belongs to the cytochrome c oxidase VIIb family.</text>
</comment>